<sequence>MPDRLVSATLALRDDGTLVSPEFGELHRGASGTLARAHRTFVAGNGLPARWQRRRTFTIVTTAFGAGAGFLAAWVAWRDDPARCERLHVVAVEPHPFSRDDLHRAVSHMVVDTTISADVDALLDAWPILVPGLHRLEFDEGRVVLTLAFGDTIDLLKKLVARADAFFLDGAAASGDGIRALAKLAGEHATFATHAKSDDVKHALGETGFTFREVDDRLVGDYAPRWRARRHEPPRALPVAARRAIVIGAGLAGCAVVERLAARGWDVTLIERHERIASEASGNPAGVFHPLMTRDDNVASRLTRGGFLHALARWRALERAGHAFSRSTHGMLHLAESADDFARMRDAFDAFGPPSDYATLLDADAARAHLNLPVAQGGLLFPHGGAVWPAGLCVAQYAAAGERVRLLASTCVARLERRDDTWHALDDTGATLADAPVVVLANAGDAARLAGLRHVTLQPVRGQLTLLPPGTTAPLPCPAIGDGYAVPLDDGTLLIGATFEPDDTDPAMRAAGHAENLDRVRHLLPGLIGALPDPATLRGRVAFRWVVGDRLPLIGPLADETQATANARALGGAQARDLPRMPGLYGAFGFGSRGLVWAALGAELIASQLEGEPWPLERELADAVDPARFLIRALRARRVGSAG</sequence>
<dbReference type="EC" id="2.1.1.61" evidence="1"/>
<dbReference type="EC" id="1.5.-.-" evidence="1"/>
<dbReference type="EMBL" id="CP000378">
    <property type="protein sequence ID" value="ABF74920.1"/>
    <property type="molecule type" value="Genomic_DNA"/>
</dbReference>
<dbReference type="SMR" id="Q1BZN5"/>
<dbReference type="HOGENOM" id="CLU_022427_1_0_4"/>
<dbReference type="GO" id="GO:0005737">
    <property type="term" value="C:cytoplasm"/>
    <property type="evidence" value="ECO:0007669"/>
    <property type="project" value="UniProtKB-SubCell"/>
</dbReference>
<dbReference type="GO" id="GO:0050660">
    <property type="term" value="F:flavin adenine dinucleotide binding"/>
    <property type="evidence" value="ECO:0007669"/>
    <property type="project" value="UniProtKB-UniRule"/>
</dbReference>
<dbReference type="GO" id="GO:0016645">
    <property type="term" value="F:oxidoreductase activity, acting on the CH-NH group of donors"/>
    <property type="evidence" value="ECO:0007669"/>
    <property type="project" value="InterPro"/>
</dbReference>
<dbReference type="GO" id="GO:0004808">
    <property type="term" value="F:tRNA (5-methylaminomethyl-2-thiouridylate)(34)-methyltransferase activity"/>
    <property type="evidence" value="ECO:0007669"/>
    <property type="project" value="UniProtKB-EC"/>
</dbReference>
<dbReference type="GO" id="GO:0032259">
    <property type="term" value="P:methylation"/>
    <property type="evidence" value="ECO:0007669"/>
    <property type="project" value="UniProtKB-KW"/>
</dbReference>
<dbReference type="GO" id="GO:0002097">
    <property type="term" value="P:tRNA wobble base modification"/>
    <property type="evidence" value="ECO:0007669"/>
    <property type="project" value="UniProtKB-UniRule"/>
</dbReference>
<dbReference type="Gene3D" id="3.30.9.10">
    <property type="entry name" value="D-Amino Acid Oxidase, subunit A, domain 2"/>
    <property type="match status" value="1"/>
</dbReference>
<dbReference type="Gene3D" id="3.50.50.60">
    <property type="entry name" value="FAD/NAD(P)-binding domain"/>
    <property type="match status" value="1"/>
</dbReference>
<dbReference type="Gene3D" id="3.40.50.150">
    <property type="entry name" value="Vaccinia Virus protein VP39"/>
    <property type="match status" value="1"/>
</dbReference>
<dbReference type="HAMAP" id="MF_01102">
    <property type="entry name" value="MnmC"/>
    <property type="match status" value="1"/>
</dbReference>
<dbReference type="InterPro" id="IPR006076">
    <property type="entry name" value="FAD-dep_OxRdtase"/>
</dbReference>
<dbReference type="InterPro" id="IPR036188">
    <property type="entry name" value="FAD/NAD-bd_sf"/>
</dbReference>
<dbReference type="InterPro" id="IPR008471">
    <property type="entry name" value="MnmC-like_methylTransf"/>
</dbReference>
<dbReference type="InterPro" id="IPR029063">
    <property type="entry name" value="SAM-dependent_MTases_sf"/>
</dbReference>
<dbReference type="InterPro" id="IPR023032">
    <property type="entry name" value="tRNA_MAMT_biosynth_bifunc_MnmC"/>
</dbReference>
<dbReference type="InterPro" id="IPR017610">
    <property type="entry name" value="tRNA_S-uridine_synth_MnmC_C"/>
</dbReference>
<dbReference type="NCBIfam" id="TIGR03197">
    <property type="entry name" value="MnmC_Cterm"/>
    <property type="match status" value="1"/>
</dbReference>
<dbReference type="NCBIfam" id="NF002483">
    <property type="entry name" value="PRK01747.1-4"/>
    <property type="match status" value="1"/>
</dbReference>
<dbReference type="PANTHER" id="PTHR13847">
    <property type="entry name" value="SARCOSINE DEHYDROGENASE-RELATED"/>
    <property type="match status" value="1"/>
</dbReference>
<dbReference type="PANTHER" id="PTHR13847:SF283">
    <property type="entry name" value="TRNA 5-METHYLAMINOMETHYL-2-THIOURIDINE BIOSYNTHESIS BIFUNCTIONAL PROTEIN MNMC"/>
    <property type="match status" value="1"/>
</dbReference>
<dbReference type="Pfam" id="PF01266">
    <property type="entry name" value="DAO"/>
    <property type="match status" value="1"/>
</dbReference>
<dbReference type="Pfam" id="PF05430">
    <property type="entry name" value="Methyltransf_30"/>
    <property type="match status" value="1"/>
</dbReference>
<dbReference type="SUPFAM" id="SSF54373">
    <property type="entry name" value="FAD-linked reductases, C-terminal domain"/>
    <property type="match status" value="1"/>
</dbReference>
<dbReference type="SUPFAM" id="SSF51905">
    <property type="entry name" value="FAD/NAD(P)-binding domain"/>
    <property type="match status" value="1"/>
</dbReference>
<accession>Q1BZN5</accession>
<gene>
    <name evidence="1" type="primary">mnmC</name>
    <name type="ordered locus">Bcen_0004</name>
</gene>
<feature type="chain" id="PRO_0000347949" description="tRNA 5-methylaminomethyl-2-thiouridine biosynthesis bifunctional protein MnmC">
    <location>
        <begin position="1"/>
        <end position="643"/>
    </location>
</feature>
<feature type="region of interest" description="tRNA (mnm(5)s(2)U34)-methyltransferase">
    <location>
        <begin position="1"/>
        <end position="223"/>
    </location>
</feature>
<feature type="region of interest" description="FAD-dependent cmnm(5)s(2)U34 oxidoreductase">
    <location>
        <begin position="247"/>
        <end position="643"/>
    </location>
</feature>
<evidence type="ECO:0000255" key="1">
    <source>
        <dbReference type="HAMAP-Rule" id="MF_01102"/>
    </source>
</evidence>
<reference key="1">
    <citation type="submission" date="2006-05" db="EMBL/GenBank/DDBJ databases">
        <title>Complete sequence of chromosome 1 of Burkholderia cenocepacia AU 1054.</title>
        <authorList>
            <consortium name="US DOE Joint Genome Institute"/>
            <person name="Copeland A."/>
            <person name="Lucas S."/>
            <person name="Lapidus A."/>
            <person name="Barry K."/>
            <person name="Detter J.C."/>
            <person name="Glavina del Rio T."/>
            <person name="Hammon N."/>
            <person name="Israni S."/>
            <person name="Dalin E."/>
            <person name="Tice H."/>
            <person name="Pitluck S."/>
            <person name="Chain P."/>
            <person name="Malfatti S."/>
            <person name="Shin M."/>
            <person name="Vergez L."/>
            <person name="Schmutz J."/>
            <person name="Larimer F."/>
            <person name="Land M."/>
            <person name="Hauser L."/>
            <person name="Kyrpides N."/>
            <person name="Lykidis A."/>
            <person name="LiPuma J.J."/>
            <person name="Konstantinidis K."/>
            <person name="Tiedje J.M."/>
            <person name="Richardson P."/>
        </authorList>
    </citation>
    <scope>NUCLEOTIDE SEQUENCE [LARGE SCALE GENOMIC DNA]</scope>
    <source>
        <strain>AU 1054</strain>
    </source>
</reference>
<comment type="function">
    <text evidence="1">Catalyzes the last two steps in the biosynthesis of 5-methylaminomethyl-2-thiouridine (mnm(5)s(2)U) at the wobble position (U34) in tRNA. Catalyzes the FAD-dependent demodification of cmnm(5)s(2)U34 to nm(5)s(2)U34, followed by the transfer of a methyl group from S-adenosyl-L-methionine to nm(5)s(2)U34, to form mnm(5)s(2)U34.</text>
</comment>
<comment type="catalytic activity">
    <reaction evidence="1">
        <text>5-aminomethyl-2-thiouridine(34) in tRNA + S-adenosyl-L-methionine = 5-methylaminomethyl-2-thiouridine(34) in tRNA + S-adenosyl-L-homocysteine + H(+)</text>
        <dbReference type="Rhea" id="RHEA:19569"/>
        <dbReference type="Rhea" id="RHEA-COMP:10195"/>
        <dbReference type="Rhea" id="RHEA-COMP:10197"/>
        <dbReference type="ChEBI" id="CHEBI:15378"/>
        <dbReference type="ChEBI" id="CHEBI:57856"/>
        <dbReference type="ChEBI" id="CHEBI:59789"/>
        <dbReference type="ChEBI" id="CHEBI:74454"/>
        <dbReference type="ChEBI" id="CHEBI:74455"/>
        <dbReference type="EC" id="2.1.1.61"/>
    </reaction>
</comment>
<comment type="cofactor">
    <cofactor evidence="1">
        <name>FAD</name>
        <dbReference type="ChEBI" id="CHEBI:57692"/>
    </cofactor>
</comment>
<comment type="subcellular location">
    <subcellularLocation>
        <location evidence="1">Cytoplasm</location>
    </subcellularLocation>
</comment>
<comment type="similarity">
    <text evidence="1">In the N-terminal section; belongs to the methyltransferase superfamily. tRNA (mnm(5)s(2)U34)-methyltransferase family.</text>
</comment>
<comment type="similarity">
    <text evidence="1">In the C-terminal section; belongs to the DAO family.</text>
</comment>
<name>MNMC_BURO1</name>
<protein>
    <recommendedName>
        <fullName evidence="1">tRNA 5-methylaminomethyl-2-thiouridine biosynthesis bifunctional protein MnmC</fullName>
        <shortName evidence="1">tRNA mnm(5)s(2)U biosynthesis bifunctional protein</shortName>
    </recommendedName>
    <domain>
        <recommendedName>
            <fullName evidence="1">tRNA (mnm(5)s(2)U34)-methyltransferase</fullName>
            <ecNumber evidence="1">2.1.1.61</ecNumber>
        </recommendedName>
    </domain>
    <domain>
        <recommendedName>
            <fullName evidence="1">FAD-dependent cmnm(5)s(2)U34 oxidoreductase</fullName>
            <ecNumber evidence="1">1.5.-.-</ecNumber>
        </recommendedName>
    </domain>
</protein>
<keyword id="KW-0963">Cytoplasm</keyword>
<keyword id="KW-0274">FAD</keyword>
<keyword id="KW-0285">Flavoprotein</keyword>
<keyword id="KW-0489">Methyltransferase</keyword>
<keyword id="KW-0511">Multifunctional enzyme</keyword>
<keyword id="KW-0560">Oxidoreductase</keyword>
<keyword id="KW-0949">S-adenosyl-L-methionine</keyword>
<keyword id="KW-0808">Transferase</keyword>
<keyword id="KW-0819">tRNA processing</keyword>
<organism>
    <name type="scientific">Burkholderia orbicola (strain AU 1054)</name>
    <dbReference type="NCBI Taxonomy" id="331271"/>
    <lineage>
        <taxon>Bacteria</taxon>
        <taxon>Pseudomonadati</taxon>
        <taxon>Pseudomonadota</taxon>
        <taxon>Betaproteobacteria</taxon>
        <taxon>Burkholderiales</taxon>
        <taxon>Burkholderiaceae</taxon>
        <taxon>Burkholderia</taxon>
        <taxon>Burkholderia cepacia complex</taxon>
        <taxon>Burkholderia orbicola</taxon>
    </lineage>
</organism>
<proteinExistence type="inferred from homology"/>